<evidence type="ECO:0000250" key="1">
    <source>
        <dbReference type="UniProtKB" id="O58403"/>
    </source>
</evidence>
<evidence type="ECO:0000250" key="2">
    <source>
        <dbReference type="UniProtKB" id="P22634"/>
    </source>
</evidence>
<evidence type="ECO:0000255" key="3">
    <source>
        <dbReference type="HAMAP-Rule" id="MF_00258"/>
    </source>
</evidence>
<evidence type="ECO:0000269" key="4">
    <source>
    </source>
</evidence>
<evidence type="ECO:0000305" key="5">
    <source>
    </source>
</evidence>
<evidence type="ECO:0007829" key="6">
    <source>
        <dbReference type="PDB" id="2OHO"/>
    </source>
</evidence>
<dbReference type="EC" id="5.1.1.3" evidence="3 4"/>
<dbReference type="EMBL" id="AE004092">
    <property type="protein sequence ID" value="AAK33406.1"/>
    <property type="molecule type" value="Genomic_DNA"/>
</dbReference>
<dbReference type="EMBL" id="CP000017">
    <property type="protein sequence ID" value="AAZ50922.1"/>
    <property type="molecule type" value="Genomic_DNA"/>
</dbReference>
<dbReference type="RefSeq" id="NP_268685.1">
    <property type="nucleotide sequence ID" value="NC_002737.2"/>
</dbReference>
<dbReference type="PDB" id="2OHG">
    <property type="method" value="X-ray"/>
    <property type="resolution" value="2.50 A"/>
    <property type="chains" value="A=1-264"/>
</dbReference>
<dbReference type="PDB" id="2OHO">
    <property type="method" value="X-ray"/>
    <property type="resolution" value="2.25 A"/>
    <property type="chains" value="A/B=1-264"/>
</dbReference>
<dbReference type="PDB" id="2OHV">
    <property type="method" value="X-ray"/>
    <property type="resolution" value="2.50 A"/>
    <property type="chains" value="A=1-264"/>
</dbReference>
<dbReference type="PDBsum" id="2OHG"/>
<dbReference type="PDBsum" id="2OHO"/>
<dbReference type="PDBsum" id="2OHV"/>
<dbReference type="SMR" id="Q9A1B7"/>
<dbReference type="DrugBank" id="DB08272">
    <property type="generic name" value="(4S)-4-(2-NAPHTHYLMETHYL)-D-GLUTAMIC ACID"/>
</dbReference>
<dbReference type="PaxDb" id="1314-HKU360_00339"/>
<dbReference type="KEGG" id="spy:SPy_0361"/>
<dbReference type="KEGG" id="spz:M5005_Spy0303"/>
<dbReference type="PATRIC" id="fig|160490.10.peg.312"/>
<dbReference type="HOGENOM" id="CLU_052344_0_2_9"/>
<dbReference type="OMA" id="LDFFKPH"/>
<dbReference type="BRENDA" id="5.1.1.3">
    <property type="organism ID" value="5935"/>
</dbReference>
<dbReference type="SABIO-RK" id="Q9A1B7"/>
<dbReference type="UniPathway" id="UPA00219"/>
<dbReference type="EvolutionaryTrace" id="Q9A1B7"/>
<dbReference type="Proteomes" id="UP000000750">
    <property type="component" value="Chromosome"/>
</dbReference>
<dbReference type="GO" id="GO:0008881">
    <property type="term" value="F:glutamate racemase activity"/>
    <property type="evidence" value="ECO:0007669"/>
    <property type="project" value="UniProtKB-UniRule"/>
</dbReference>
<dbReference type="GO" id="GO:0071555">
    <property type="term" value="P:cell wall organization"/>
    <property type="evidence" value="ECO:0007669"/>
    <property type="project" value="UniProtKB-KW"/>
</dbReference>
<dbReference type="GO" id="GO:0009252">
    <property type="term" value="P:peptidoglycan biosynthetic process"/>
    <property type="evidence" value="ECO:0007669"/>
    <property type="project" value="UniProtKB-UniRule"/>
</dbReference>
<dbReference type="GO" id="GO:0008360">
    <property type="term" value="P:regulation of cell shape"/>
    <property type="evidence" value="ECO:0007669"/>
    <property type="project" value="UniProtKB-KW"/>
</dbReference>
<dbReference type="FunFam" id="3.40.50.1860:FF:000002">
    <property type="entry name" value="Glutamate racemase"/>
    <property type="match status" value="1"/>
</dbReference>
<dbReference type="Gene3D" id="3.40.50.1860">
    <property type="match status" value="2"/>
</dbReference>
<dbReference type="HAMAP" id="MF_00258">
    <property type="entry name" value="Glu_racemase"/>
    <property type="match status" value="1"/>
</dbReference>
<dbReference type="InterPro" id="IPR015942">
    <property type="entry name" value="Asp/Glu/hydantoin_racemase"/>
</dbReference>
<dbReference type="InterPro" id="IPR001920">
    <property type="entry name" value="Asp/Glu_race"/>
</dbReference>
<dbReference type="InterPro" id="IPR033134">
    <property type="entry name" value="Asp/Glu_racemase_AS_2"/>
</dbReference>
<dbReference type="InterPro" id="IPR004391">
    <property type="entry name" value="Glu_race"/>
</dbReference>
<dbReference type="NCBIfam" id="TIGR00067">
    <property type="entry name" value="glut_race"/>
    <property type="match status" value="1"/>
</dbReference>
<dbReference type="NCBIfam" id="NF002035">
    <property type="entry name" value="PRK00865.1-3"/>
    <property type="match status" value="1"/>
</dbReference>
<dbReference type="PANTHER" id="PTHR21198">
    <property type="entry name" value="GLUTAMATE RACEMASE"/>
    <property type="match status" value="1"/>
</dbReference>
<dbReference type="PANTHER" id="PTHR21198:SF2">
    <property type="entry name" value="GLUTAMATE RACEMASE"/>
    <property type="match status" value="1"/>
</dbReference>
<dbReference type="Pfam" id="PF01177">
    <property type="entry name" value="Asp_Glu_race"/>
    <property type="match status" value="1"/>
</dbReference>
<dbReference type="SUPFAM" id="SSF53681">
    <property type="entry name" value="Aspartate/glutamate racemase"/>
    <property type="match status" value="2"/>
</dbReference>
<dbReference type="PROSITE" id="PS00924">
    <property type="entry name" value="ASP_GLU_RACEMASE_2"/>
    <property type="match status" value="1"/>
</dbReference>
<keyword id="KW-0002">3D-structure</keyword>
<keyword id="KW-0133">Cell shape</keyword>
<keyword id="KW-0961">Cell wall biogenesis/degradation</keyword>
<keyword id="KW-0413">Isomerase</keyword>
<keyword id="KW-0573">Peptidoglycan synthesis</keyword>
<keyword id="KW-1185">Reference proteome</keyword>
<accession>Q9A1B7</accession>
<accession>Q490P6</accession>
<feature type="chain" id="PRO_0000095521" description="Glutamate racemase">
    <location>
        <begin position="1"/>
        <end position="264"/>
    </location>
</feature>
<feature type="active site" description="Proton donor/acceptor" evidence="1 3">
    <location>
        <position position="73"/>
    </location>
</feature>
<feature type="active site" description="Proton donor/acceptor" evidence="1 3">
    <location>
        <position position="183"/>
    </location>
</feature>
<feature type="binding site" evidence="3 5">
    <location>
        <begin position="10"/>
        <end position="11"/>
    </location>
    <ligand>
        <name>substrate</name>
    </ligand>
</feature>
<feature type="binding site" evidence="2 3">
    <location>
        <begin position="42"/>
        <end position="43"/>
    </location>
    <ligand>
        <name>substrate</name>
    </ligand>
</feature>
<feature type="binding site" evidence="3 5">
    <location>
        <begin position="74"/>
        <end position="75"/>
    </location>
    <ligand>
        <name>substrate</name>
    </ligand>
</feature>
<feature type="binding site" evidence="2 3">
    <location>
        <begin position="184"/>
        <end position="185"/>
    </location>
    <ligand>
        <name>substrate</name>
    </ligand>
</feature>
<feature type="strand" evidence="6">
    <location>
        <begin position="6"/>
        <end position="13"/>
    </location>
</feature>
<feature type="helix" evidence="6">
    <location>
        <begin position="16"/>
        <end position="25"/>
    </location>
</feature>
<feature type="strand" evidence="6">
    <location>
        <begin position="31"/>
        <end position="35"/>
    </location>
</feature>
<feature type="helix" evidence="6">
    <location>
        <begin position="37"/>
        <end position="39"/>
    </location>
</feature>
<feature type="helix" evidence="6">
    <location>
        <begin position="47"/>
        <end position="62"/>
    </location>
</feature>
<feature type="turn" evidence="6">
    <location>
        <begin position="63"/>
        <end position="65"/>
    </location>
</feature>
<feature type="strand" evidence="6">
    <location>
        <begin position="67"/>
        <end position="71"/>
    </location>
</feature>
<feature type="helix" evidence="6">
    <location>
        <begin position="74"/>
        <end position="87"/>
    </location>
</feature>
<feature type="strand" evidence="6">
    <location>
        <begin position="92"/>
        <end position="95"/>
    </location>
</feature>
<feature type="helix" evidence="6">
    <location>
        <begin position="96"/>
        <end position="106"/>
    </location>
</feature>
<feature type="strand" evidence="6">
    <location>
        <begin position="108"/>
        <end position="116"/>
    </location>
</feature>
<feature type="helix" evidence="6">
    <location>
        <begin position="118"/>
        <end position="123"/>
    </location>
</feature>
<feature type="helix" evidence="6">
    <location>
        <begin position="125"/>
        <end position="133"/>
    </location>
</feature>
<feature type="strand" evidence="6">
    <location>
        <begin position="137"/>
        <end position="143"/>
    </location>
</feature>
<feature type="helix" evidence="6">
    <location>
        <begin position="147"/>
        <end position="151"/>
    </location>
</feature>
<feature type="helix" evidence="6">
    <location>
        <begin position="153"/>
        <end position="155"/>
    </location>
</feature>
<feature type="helix" evidence="6">
    <location>
        <begin position="159"/>
        <end position="169"/>
    </location>
</feature>
<feature type="turn" evidence="6">
    <location>
        <begin position="170"/>
        <end position="174"/>
    </location>
</feature>
<feature type="strand" evidence="6">
    <location>
        <begin position="177"/>
        <end position="181"/>
    </location>
</feature>
<feature type="helix" evidence="6">
    <location>
        <begin position="186"/>
        <end position="189"/>
    </location>
</feature>
<feature type="helix" evidence="6">
    <location>
        <begin position="190"/>
        <end position="197"/>
    </location>
</feature>
<feature type="strand" evidence="6">
    <location>
        <begin position="201"/>
        <end position="205"/>
    </location>
</feature>
<feature type="helix" evidence="6">
    <location>
        <begin position="206"/>
        <end position="220"/>
    </location>
</feature>
<feature type="strand" evidence="6">
    <location>
        <begin position="235"/>
        <end position="240"/>
    </location>
</feature>
<feature type="helix" evidence="6">
    <location>
        <begin position="242"/>
        <end position="252"/>
    </location>
</feature>
<feature type="strand" evidence="6">
    <location>
        <begin position="259"/>
        <end position="261"/>
    </location>
</feature>
<protein>
    <recommendedName>
        <fullName evidence="3">Glutamate racemase</fullName>
        <ecNumber evidence="3 4">5.1.1.3</ecNumber>
    </recommendedName>
</protein>
<sequence length="264" mass="29016">MDTRPIGFLDSGVGGLTVVCELIRQLPHEKIVYIGDSARAPYGPRPKKQIKEYTWELVNFLLTQNVKMIVFACNTATAVAWEEVKAALDIPVLGVVLPGASAAIKSTTKGQVGVIGTPMTVASDIYRKKIQLLAPSIQVRSLACPKFVPIVESNEMCSSIAKKIVYDSLAPLVGKIDTLVLGCTHYPLLRPIIQNVMGPSVKLIDSGAECVRDISVLLNYFDINGNYHQKAVEHRFFTTANPEIFQEIASIWLKQKINVEHVTL</sequence>
<comment type="function">
    <text evidence="3">Provides the (R)-glutamate required for cell wall biosynthesis.</text>
</comment>
<comment type="catalytic activity">
    <reaction evidence="3 4">
        <text>L-glutamate = D-glutamate</text>
        <dbReference type="Rhea" id="RHEA:12813"/>
        <dbReference type="ChEBI" id="CHEBI:29985"/>
        <dbReference type="ChEBI" id="CHEBI:29986"/>
        <dbReference type="EC" id="5.1.1.3"/>
    </reaction>
</comment>
<comment type="pathway">
    <text evidence="3">Cell wall biogenesis; peptidoglycan biosynthesis.</text>
</comment>
<comment type="subunit">
    <text evidence="4">Homodimer.</text>
</comment>
<comment type="similarity">
    <text evidence="3">Belongs to the aspartate/glutamate racemases family.</text>
</comment>
<proteinExistence type="evidence at protein level"/>
<gene>
    <name evidence="3" type="primary">murI</name>
    <name type="synonym">glr</name>
    <name type="ordered locus">SPy_0361</name>
    <name type="ordered locus">M5005_Spy0303</name>
</gene>
<reference key="1">
    <citation type="journal article" date="2001" name="Proc. Natl. Acad. Sci. U.S.A.">
        <title>Complete genome sequence of an M1 strain of Streptococcus pyogenes.</title>
        <authorList>
            <person name="Ferretti J.J."/>
            <person name="McShan W.M."/>
            <person name="Ajdic D.J."/>
            <person name="Savic D.J."/>
            <person name="Savic G."/>
            <person name="Lyon K."/>
            <person name="Primeaux C."/>
            <person name="Sezate S."/>
            <person name="Suvorov A.N."/>
            <person name="Kenton S."/>
            <person name="Lai H.S."/>
            <person name="Lin S.P."/>
            <person name="Qian Y."/>
            <person name="Jia H.G."/>
            <person name="Najar F.Z."/>
            <person name="Ren Q."/>
            <person name="Zhu H."/>
            <person name="Song L."/>
            <person name="White J."/>
            <person name="Yuan X."/>
            <person name="Clifton S.W."/>
            <person name="Roe B.A."/>
            <person name="McLaughlin R.E."/>
        </authorList>
    </citation>
    <scope>NUCLEOTIDE SEQUENCE [LARGE SCALE GENOMIC DNA]</scope>
    <source>
        <strain>ATCC 700294 / SF370 / Serotype M1</strain>
    </source>
</reference>
<reference key="2">
    <citation type="journal article" date="2005" name="J. Infect. Dis.">
        <title>Evolutionary origin and emergence of a highly successful clone of serotype M1 group A Streptococcus involved multiple horizontal gene transfer events.</title>
        <authorList>
            <person name="Sumby P."/>
            <person name="Porcella S.F."/>
            <person name="Madrigal A.G."/>
            <person name="Barbian K.D."/>
            <person name="Virtaneva K."/>
            <person name="Ricklefs S.M."/>
            <person name="Sturdevant D.E."/>
            <person name="Graham M.R."/>
            <person name="Vuopio-Varkila J."/>
            <person name="Hoe N.P."/>
            <person name="Musser J.M."/>
        </authorList>
    </citation>
    <scope>NUCLEOTIDE SEQUENCE [LARGE SCALE GENOMIC DNA]</scope>
    <source>
        <strain>ATCC BAA-947 / MGAS5005 / Serotype M1</strain>
    </source>
</reference>
<reference key="3">
    <citation type="journal article" date="2007" name="J. Mol. Biol.">
        <title>Structural basis for glutamate racemase inhibition.</title>
        <authorList>
            <person name="Kim K.H."/>
            <person name="Bong Y.J."/>
            <person name="Park J.K."/>
            <person name="Shin K.J."/>
            <person name="Hwang K.Y."/>
            <person name="Kim E.E."/>
        </authorList>
    </citation>
    <scope>X-RAY CRYSTALLOGRAPHY (2.25 ANGSTROMS) IN COMPLEX WITH (4S)-4-(2-NAPHTHYLMETHYL)-D-GLUTAMIC ACID</scope>
    <scope>CATALYTIC ACTIVITY</scope>
    <scope>SUBUNIT</scope>
</reference>
<organism>
    <name type="scientific">Streptococcus pyogenes serotype M1</name>
    <dbReference type="NCBI Taxonomy" id="301447"/>
    <lineage>
        <taxon>Bacteria</taxon>
        <taxon>Bacillati</taxon>
        <taxon>Bacillota</taxon>
        <taxon>Bacilli</taxon>
        <taxon>Lactobacillales</taxon>
        <taxon>Streptococcaceae</taxon>
        <taxon>Streptococcus</taxon>
    </lineage>
</organism>
<name>MURI_STRP1</name>